<reference key="1">
    <citation type="journal article" date="2007" name="PLoS ONE">
        <title>Analysis of the neurotoxin complex genes in Clostridium botulinum A1-A4 and B1 strains: BoNT/A3, /Ba4 and /B1 clusters are located within plasmids.</title>
        <authorList>
            <person name="Smith T.J."/>
            <person name="Hill K.K."/>
            <person name="Foley B.T."/>
            <person name="Detter J.C."/>
            <person name="Munk A.C."/>
            <person name="Bruce D.C."/>
            <person name="Doggett N.A."/>
            <person name="Smith L.A."/>
            <person name="Marks J.D."/>
            <person name="Xie G."/>
            <person name="Brettin T.S."/>
        </authorList>
    </citation>
    <scope>NUCLEOTIDE SEQUENCE [LARGE SCALE GENOMIC DNA]</scope>
    <source>
        <strain>Okra / Type B1</strain>
    </source>
</reference>
<name>RS20_CLOBK</name>
<accession>B1ILN1</accession>
<protein>
    <recommendedName>
        <fullName evidence="1">Small ribosomal subunit protein bS20</fullName>
    </recommendedName>
    <alternativeName>
        <fullName evidence="2">30S ribosomal protein S20</fullName>
    </alternativeName>
</protein>
<organism>
    <name type="scientific">Clostridium botulinum (strain Okra / Type B1)</name>
    <dbReference type="NCBI Taxonomy" id="498213"/>
    <lineage>
        <taxon>Bacteria</taxon>
        <taxon>Bacillati</taxon>
        <taxon>Bacillota</taxon>
        <taxon>Clostridia</taxon>
        <taxon>Eubacteriales</taxon>
        <taxon>Clostridiaceae</taxon>
        <taxon>Clostridium</taxon>
    </lineage>
</organism>
<proteinExistence type="inferred from homology"/>
<dbReference type="EMBL" id="CP000939">
    <property type="protein sequence ID" value="ACA43724.1"/>
    <property type="molecule type" value="Genomic_DNA"/>
</dbReference>
<dbReference type="RefSeq" id="WP_003358111.1">
    <property type="nucleotide sequence ID" value="NC_010516.1"/>
</dbReference>
<dbReference type="SMR" id="B1ILN1"/>
<dbReference type="GeneID" id="5187653"/>
<dbReference type="KEGG" id="cbb:CLD_1578"/>
<dbReference type="HOGENOM" id="CLU_160655_0_0_9"/>
<dbReference type="Proteomes" id="UP000008541">
    <property type="component" value="Chromosome"/>
</dbReference>
<dbReference type="GO" id="GO:0005829">
    <property type="term" value="C:cytosol"/>
    <property type="evidence" value="ECO:0007669"/>
    <property type="project" value="TreeGrafter"/>
</dbReference>
<dbReference type="GO" id="GO:0015935">
    <property type="term" value="C:small ribosomal subunit"/>
    <property type="evidence" value="ECO:0007669"/>
    <property type="project" value="TreeGrafter"/>
</dbReference>
<dbReference type="GO" id="GO:0070181">
    <property type="term" value="F:small ribosomal subunit rRNA binding"/>
    <property type="evidence" value="ECO:0007669"/>
    <property type="project" value="TreeGrafter"/>
</dbReference>
<dbReference type="GO" id="GO:0003735">
    <property type="term" value="F:structural constituent of ribosome"/>
    <property type="evidence" value="ECO:0007669"/>
    <property type="project" value="InterPro"/>
</dbReference>
<dbReference type="GO" id="GO:0006412">
    <property type="term" value="P:translation"/>
    <property type="evidence" value="ECO:0007669"/>
    <property type="project" value="UniProtKB-UniRule"/>
</dbReference>
<dbReference type="FunFam" id="1.20.58.110:FF:000001">
    <property type="entry name" value="30S ribosomal protein S20"/>
    <property type="match status" value="1"/>
</dbReference>
<dbReference type="Gene3D" id="1.20.58.110">
    <property type="entry name" value="Ribosomal protein S20"/>
    <property type="match status" value="1"/>
</dbReference>
<dbReference type="HAMAP" id="MF_00500">
    <property type="entry name" value="Ribosomal_bS20"/>
    <property type="match status" value="1"/>
</dbReference>
<dbReference type="InterPro" id="IPR002583">
    <property type="entry name" value="Ribosomal_bS20"/>
</dbReference>
<dbReference type="InterPro" id="IPR036510">
    <property type="entry name" value="Ribosomal_bS20_sf"/>
</dbReference>
<dbReference type="NCBIfam" id="TIGR00029">
    <property type="entry name" value="S20"/>
    <property type="match status" value="1"/>
</dbReference>
<dbReference type="PANTHER" id="PTHR33398">
    <property type="entry name" value="30S RIBOSOMAL PROTEIN S20"/>
    <property type="match status" value="1"/>
</dbReference>
<dbReference type="PANTHER" id="PTHR33398:SF1">
    <property type="entry name" value="SMALL RIBOSOMAL SUBUNIT PROTEIN BS20C"/>
    <property type="match status" value="1"/>
</dbReference>
<dbReference type="Pfam" id="PF01649">
    <property type="entry name" value="Ribosomal_S20p"/>
    <property type="match status" value="1"/>
</dbReference>
<dbReference type="SUPFAM" id="SSF46992">
    <property type="entry name" value="Ribosomal protein S20"/>
    <property type="match status" value="1"/>
</dbReference>
<gene>
    <name evidence="1" type="primary">rpsT</name>
    <name type="ordered locus">CLD_1578</name>
</gene>
<keyword id="KW-0687">Ribonucleoprotein</keyword>
<keyword id="KW-0689">Ribosomal protein</keyword>
<keyword id="KW-0694">RNA-binding</keyword>
<keyword id="KW-0699">rRNA-binding</keyword>
<sequence length="88" mass="9655">MANIKSAKKRIKVIETKTLRNKMLKSSLKTTIKNFLTVVEGKNVEEAKAAYKTAARALDMSVSKGIVHKNKAARTKSRLAAKLNALNA</sequence>
<comment type="function">
    <text evidence="1">Binds directly to 16S ribosomal RNA.</text>
</comment>
<comment type="similarity">
    <text evidence="1">Belongs to the bacterial ribosomal protein bS20 family.</text>
</comment>
<feature type="chain" id="PRO_1000126424" description="Small ribosomal subunit protein bS20">
    <location>
        <begin position="1"/>
        <end position="88"/>
    </location>
</feature>
<evidence type="ECO:0000255" key="1">
    <source>
        <dbReference type="HAMAP-Rule" id="MF_00500"/>
    </source>
</evidence>
<evidence type="ECO:0000305" key="2"/>